<dbReference type="EC" id="2.7.7.19"/>
<dbReference type="EMBL" id="DQ103505">
    <property type="protein sequence ID" value="AAZ80292.1"/>
    <property type="molecule type" value="mRNA"/>
</dbReference>
<dbReference type="EMBL" id="AK035810">
    <property type="protein sequence ID" value="BAC29194.1"/>
    <property type="molecule type" value="mRNA"/>
</dbReference>
<dbReference type="EMBL" id="AL662810">
    <property type="status" value="NOT_ANNOTATED_CDS"/>
    <property type="molecule type" value="Genomic_DNA"/>
</dbReference>
<dbReference type="EMBL" id="BC059271">
    <property type="protein sequence ID" value="AAH59271.1"/>
    <property type="molecule type" value="mRNA"/>
</dbReference>
<dbReference type="CCDS" id="CCDS24481.1"/>
<dbReference type="RefSeq" id="NP_766143.2">
    <property type="nucleotide sequence ID" value="NM_172555.2"/>
</dbReference>
<dbReference type="SMR" id="Q6PCL9"/>
<dbReference type="BioGRID" id="229763">
    <property type="interactions" value="2"/>
</dbReference>
<dbReference type="FunCoup" id="Q6PCL9">
    <property type="interactions" value="5794"/>
</dbReference>
<dbReference type="STRING" id="10090.ENSMUSP00000020513"/>
<dbReference type="iPTMnet" id="Q6PCL9"/>
<dbReference type="PhosphoSitePlus" id="Q6PCL9"/>
<dbReference type="PaxDb" id="10090-ENSMUSP00000020513"/>
<dbReference type="PeptideAtlas" id="Q6PCL9"/>
<dbReference type="ProteomicsDB" id="294005"/>
<dbReference type="Pumba" id="Q6PCL9"/>
<dbReference type="Antibodypedia" id="30527">
    <property type="antibodies" value="132 antibodies from 20 providers"/>
</dbReference>
<dbReference type="Ensembl" id="ENSMUST00000020513.10">
    <property type="protein sequence ID" value="ENSMUSP00000020513.4"/>
    <property type="gene ID" value="ENSMUSG00000020273.14"/>
</dbReference>
<dbReference type="GeneID" id="216578"/>
<dbReference type="KEGG" id="mmu:216578"/>
<dbReference type="UCSC" id="uc007ifp.2">
    <property type="organism name" value="mouse"/>
</dbReference>
<dbReference type="AGR" id="MGI:2442119"/>
<dbReference type="CTD" id="64895"/>
<dbReference type="MGI" id="MGI:2442119">
    <property type="gene designation" value="Papolg"/>
</dbReference>
<dbReference type="VEuPathDB" id="HostDB:ENSMUSG00000020273"/>
<dbReference type="eggNOG" id="KOG2245">
    <property type="taxonomic scope" value="Eukaryota"/>
</dbReference>
<dbReference type="GeneTree" id="ENSGT00940000156467"/>
<dbReference type="HOGENOM" id="CLU_011511_1_2_1"/>
<dbReference type="InParanoid" id="Q6PCL9"/>
<dbReference type="OMA" id="WEGWIES"/>
<dbReference type="OrthoDB" id="412748at2759"/>
<dbReference type="PhylomeDB" id="Q6PCL9"/>
<dbReference type="TreeFam" id="TF300842"/>
<dbReference type="BioGRID-ORCS" id="216578">
    <property type="hits" value="4 hits in 78 CRISPR screens"/>
</dbReference>
<dbReference type="ChiTaRS" id="Papolg">
    <property type="organism name" value="mouse"/>
</dbReference>
<dbReference type="PRO" id="PR:Q6PCL9"/>
<dbReference type="Proteomes" id="UP000000589">
    <property type="component" value="Chromosome 11"/>
</dbReference>
<dbReference type="RNAct" id="Q6PCL9">
    <property type="molecule type" value="protein"/>
</dbReference>
<dbReference type="Bgee" id="ENSMUSG00000020273">
    <property type="expression patterns" value="Expressed in secondary oocyte and 246 other cell types or tissues"/>
</dbReference>
<dbReference type="ExpressionAtlas" id="Q6PCL9">
    <property type="expression patterns" value="baseline and differential"/>
</dbReference>
<dbReference type="GO" id="GO:0005829">
    <property type="term" value="C:cytosol"/>
    <property type="evidence" value="ECO:0007669"/>
    <property type="project" value="Ensembl"/>
</dbReference>
<dbReference type="GO" id="GO:0016604">
    <property type="term" value="C:nuclear body"/>
    <property type="evidence" value="ECO:0007669"/>
    <property type="project" value="Ensembl"/>
</dbReference>
<dbReference type="GO" id="GO:0005634">
    <property type="term" value="C:nucleus"/>
    <property type="evidence" value="ECO:0000250"/>
    <property type="project" value="UniProtKB"/>
</dbReference>
<dbReference type="GO" id="GO:0005524">
    <property type="term" value="F:ATP binding"/>
    <property type="evidence" value="ECO:0007669"/>
    <property type="project" value="UniProtKB-KW"/>
</dbReference>
<dbReference type="GO" id="GO:0046872">
    <property type="term" value="F:metal ion binding"/>
    <property type="evidence" value="ECO:0000250"/>
    <property type="project" value="UniProtKB"/>
</dbReference>
<dbReference type="GO" id="GO:1990817">
    <property type="term" value="F:poly(A) RNA polymerase activity"/>
    <property type="evidence" value="ECO:0000250"/>
    <property type="project" value="UniProtKB"/>
</dbReference>
<dbReference type="GO" id="GO:0003723">
    <property type="term" value="F:RNA binding"/>
    <property type="evidence" value="ECO:0007669"/>
    <property type="project" value="UniProtKB-KW"/>
</dbReference>
<dbReference type="GO" id="GO:0006397">
    <property type="term" value="P:mRNA processing"/>
    <property type="evidence" value="ECO:0007669"/>
    <property type="project" value="UniProtKB-KW"/>
</dbReference>
<dbReference type="GO" id="GO:0031123">
    <property type="term" value="P:RNA 3'-end processing"/>
    <property type="evidence" value="ECO:0007669"/>
    <property type="project" value="InterPro"/>
</dbReference>
<dbReference type="CDD" id="cd05402">
    <property type="entry name" value="NT_PAP_TUTase"/>
    <property type="match status" value="1"/>
</dbReference>
<dbReference type="FunFam" id="3.30.460.10:FF:000002">
    <property type="entry name" value="Poly(A) polymerase alpha, putative"/>
    <property type="match status" value="1"/>
</dbReference>
<dbReference type="FunFam" id="1.10.1410.10:FF:000001">
    <property type="entry name" value="Putative poly(A) polymerase gamma"/>
    <property type="match status" value="1"/>
</dbReference>
<dbReference type="FunFam" id="3.30.70.590:FF:000001">
    <property type="entry name" value="Putative poly(A) polymerase gamma"/>
    <property type="match status" value="1"/>
</dbReference>
<dbReference type="Gene3D" id="1.10.1410.10">
    <property type="match status" value="1"/>
</dbReference>
<dbReference type="Gene3D" id="3.30.460.10">
    <property type="entry name" value="Beta Polymerase, domain 2"/>
    <property type="match status" value="1"/>
</dbReference>
<dbReference type="Gene3D" id="3.30.70.590">
    <property type="entry name" value="Poly(A) polymerase predicted RNA binding domain"/>
    <property type="match status" value="1"/>
</dbReference>
<dbReference type="InterPro" id="IPR043519">
    <property type="entry name" value="NT_sf"/>
</dbReference>
<dbReference type="InterPro" id="IPR011068">
    <property type="entry name" value="NuclTrfase_I-like_C"/>
</dbReference>
<dbReference type="InterPro" id="IPR007012">
    <property type="entry name" value="PolA_pol_cen_dom"/>
</dbReference>
<dbReference type="InterPro" id="IPR048840">
    <property type="entry name" value="PolA_pol_NTPase"/>
</dbReference>
<dbReference type="InterPro" id="IPR007010">
    <property type="entry name" value="PolA_pol_RNA-bd_dom"/>
</dbReference>
<dbReference type="PANTHER" id="PTHR10682">
    <property type="entry name" value="POLY A POLYMERASE"/>
    <property type="match status" value="1"/>
</dbReference>
<dbReference type="PANTHER" id="PTHR10682:SF6">
    <property type="entry name" value="POLY(A) POLYMERASE GAMMA"/>
    <property type="match status" value="1"/>
</dbReference>
<dbReference type="Pfam" id="PF04928">
    <property type="entry name" value="PAP_central"/>
    <property type="match status" value="1"/>
</dbReference>
<dbReference type="Pfam" id="PF20750">
    <property type="entry name" value="PAP_NTPase"/>
    <property type="match status" value="1"/>
</dbReference>
<dbReference type="Pfam" id="PF04926">
    <property type="entry name" value="PAP_RNA-bind"/>
    <property type="match status" value="2"/>
</dbReference>
<dbReference type="SUPFAM" id="SSF81301">
    <property type="entry name" value="Nucleotidyltransferase"/>
    <property type="match status" value="1"/>
</dbReference>
<dbReference type="SUPFAM" id="SSF55003">
    <property type="entry name" value="PAP/Archaeal CCA-adding enzyme, C-terminal domain"/>
    <property type="match status" value="1"/>
</dbReference>
<dbReference type="SUPFAM" id="SSF81631">
    <property type="entry name" value="PAP/OAS1 substrate-binding domain"/>
    <property type="match status" value="1"/>
</dbReference>
<accession>Q6PCL9</accession>
<accession>Q8BZC9</accession>
<sequence>MKEMSANTMLDSQRQQKHYGITSPISLACPKEIDHIYTQKLIDAMKPFGVFEDEEELNHRLVVLGKLNNLVKEWISDISESKNLPPSVVATVGGKIFTFGSYRLGVHTKGADIDALCVAPRHVERSDFFQSFFEKLKHQDGIRNLRAVEDAFVPVIKFEFDGIEIDLVFARLAIQTISDNLDLRDDSRLRSLDIRCIRSLNGCRVTDEILHLVPNKETFRLTLRAVKLWAKRRGIYSNMLGFLGGVSWAMLVARTCQLYPNAAASTLVHKFFLVFSKWEWPNPVLLKQPEESNLNLPVWDPRVNPSDRYHLMPIITPAYPQQNSTYNVSTSTRTVMVEEFKQGLAVTDEILQGKSDWSKLLEPPNFFQKYRHYIVLTASASTEENHLEWVGLVESKIRVLVGNLERNEFITLAHVNPQSFPGNKEHHKANNYVSMWFLGIIFRRVENAESVNIDLTYDIQSFTDTVYRQANNINMLKDGMKIEATHVKKKQLHHYLPAEILQKKKKSLSDVSRSSGGLQSKRSSLDSTCLDSSRDTDSGTPFNSPVSANKPSNPDSPTGEIERSSAEPVAVVVEKLPSVPPAQGLSIPVIGAKVDPTAKAVSSPAVCTIPTVVGRNVIPRITTPHNPVQGQPHLNGISNITKNVTPKRSHSPPTDGTSKRLKDIEKFIRLESAFKESRAAEDRKRKPMDSIGGESMPIPTIDTARKKRLPSKELPDSSSPVPANNIRVIKNSIRLTLNR</sequence>
<comment type="function">
    <text evidence="1">Responsible for the post-transcriptional adenylation of the 3'-terminal of mRNA precursors and several small RNAs including signal recognition particle (SRP) RNA, nuclear 7SK RNA, U2 small nuclear RNA, and ribosomal 5S RNA.</text>
</comment>
<comment type="catalytic activity">
    <reaction>
        <text>RNA(n) + ATP = RNA(n)-3'-adenine ribonucleotide + diphosphate</text>
        <dbReference type="Rhea" id="RHEA:11332"/>
        <dbReference type="Rhea" id="RHEA-COMP:14527"/>
        <dbReference type="Rhea" id="RHEA-COMP:17347"/>
        <dbReference type="ChEBI" id="CHEBI:30616"/>
        <dbReference type="ChEBI" id="CHEBI:33019"/>
        <dbReference type="ChEBI" id="CHEBI:140395"/>
        <dbReference type="ChEBI" id="CHEBI:173115"/>
        <dbReference type="EC" id="2.7.7.19"/>
    </reaction>
</comment>
<comment type="cofactor">
    <cofactor evidence="1">
        <name>Mg(2+)</name>
        <dbReference type="ChEBI" id="CHEBI:18420"/>
    </cofactor>
    <cofactor evidence="1">
        <name>Mn(2+)</name>
        <dbReference type="ChEBI" id="CHEBI:29035"/>
    </cofactor>
    <text evidence="1">Binds 2 magnesium ions. Also active with manganese.</text>
</comment>
<comment type="subcellular location">
    <subcellularLocation>
        <location evidence="2">Nucleus</location>
    </subcellularLocation>
</comment>
<comment type="similarity">
    <text evidence="4">Belongs to the poly(A) polymerase family.</text>
</comment>
<feature type="chain" id="PRO_0000253025" description="Poly(A) polymerase gamma">
    <location>
        <begin position="1"/>
        <end position="739"/>
    </location>
</feature>
<feature type="region of interest" description="Disordered" evidence="3">
    <location>
        <begin position="506"/>
        <end position="566"/>
    </location>
</feature>
<feature type="region of interest" description="Disordered" evidence="3">
    <location>
        <begin position="677"/>
        <end position="725"/>
    </location>
</feature>
<feature type="compositionally biased region" description="Polar residues" evidence="3">
    <location>
        <begin position="509"/>
        <end position="531"/>
    </location>
</feature>
<feature type="compositionally biased region" description="Polar residues" evidence="3">
    <location>
        <begin position="538"/>
        <end position="556"/>
    </location>
</feature>
<feature type="compositionally biased region" description="Basic and acidic residues" evidence="3">
    <location>
        <begin position="677"/>
        <end position="688"/>
    </location>
</feature>
<feature type="binding site" evidence="1">
    <location>
        <begin position="99"/>
        <end position="101"/>
    </location>
    <ligand>
        <name>ATP</name>
        <dbReference type="ChEBI" id="CHEBI:30616"/>
    </ligand>
</feature>
<feature type="binding site" evidence="1">
    <location>
        <position position="108"/>
    </location>
    <ligand>
        <name>ATP</name>
        <dbReference type="ChEBI" id="CHEBI:30616"/>
    </ligand>
</feature>
<feature type="binding site" evidence="1">
    <location>
        <begin position="112"/>
        <end position="114"/>
    </location>
    <ligand>
        <name>ATP</name>
        <dbReference type="ChEBI" id="CHEBI:30616"/>
    </ligand>
</feature>
<feature type="binding site" evidence="1">
    <location>
        <position position="112"/>
    </location>
    <ligand>
        <name>Mg(2+)</name>
        <dbReference type="ChEBI" id="CHEBI:18420"/>
        <label>1</label>
        <note>catalytic</note>
    </ligand>
</feature>
<feature type="binding site" evidence="1">
    <location>
        <position position="112"/>
    </location>
    <ligand>
        <name>Mg(2+)</name>
        <dbReference type="ChEBI" id="CHEBI:18420"/>
        <label>2</label>
        <note>catalytic</note>
    </ligand>
</feature>
<feature type="binding site" evidence="1">
    <location>
        <position position="114"/>
    </location>
    <ligand>
        <name>Mg(2+)</name>
        <dbReference type="ChEBI" id="CHEBI:18420"/>
        <label>1</label>
        <note>catalytic</note>
    </ligand>
</feature>
<feature type="binding site" evidence="1">
    <location>
        <position position="114"/>
    </location>
    <ligand>
        <name>Mg(2+)</name>
        <dbReference type="ChEBI" id="CHEBI:18420"/>
        <label>2</label>
        <note>catalytic</note>
    </ligand>
</feature>
<feature type="binding site" evidence="1">
    <location>
        <position position="166"/>
    </location>
    <ligand>
        <name>ATP</name>
        <dbReference type="ChEBI" id="CHEBI:30616"/>
    </ligand>
</feature>
<feature type="binding site" evidence="1">
    <location>
        <position position="166"/>
    </location>
    <ligand>
        <name>Mg(2+)</name>
        <dbReference type="ChEBI" id="CHEBI:18420"/>
        <label>2</label>
        <note>catalytic</note>
    </ligand>
</feature>
<feature type="binding site" evidence="1">
    <location>
        <position position="227"/>
    </location>
    <ligand>
        <name>ATP</name>
        <dbReference type="ChEBI" id="CHEBI:30616"/>
    </ligand>
</feature>
<feature type="binding site" evidence="1">
    <location>
        <position position="236"/>
    </location>
    <ligand>
        <name>ATP</name>
        <dbReference type="ChEBI" id="CHEBI:30616"/>
    </ligand>
</feature>
<feature type="binding site" evidence="1">
    <location>
        <begin position="245"/>
        <end position="246"/>
    </location>
    <ligand>
        <name>ATP</name>
        <dbReference type="ChEBI" id="CHEBI:30616"/>
    </ligand>
</feature>
<feature type="site" description="Interaction with RNA" evidence="1">
    <location>
        <position position="152"/>
    </location>
</feature>
<feature type="site" description="Interaction with RNA" evidence="1">
    <location>
        <position position="157"/>
    </location>
</feature>
<feature type="site" description="Interaction with RNA" evidence="1">
    <location>
        <position position="327"/>
    </location>
</feature>
<feature type="site" description="Interaction with RNA" evidence="1">
    <location>
        <position position="398"/>
    </location>
</feature>
<feature type="site" description="Interaction with RNA" evidence="1">
    <location>
        <position position="531"/>
    </location>
</feature>
<feature type="modified residue" description="N6-acetyllysine" evidence="2">
    <location>
        <position position="2"/>
    </location>
</feature>
<feature type="modified residue" description="Phosphoserine" evidence="2">
    <location>
        <position position="23"/>
    </location>
</feature>
<feature type="modified residue" description="Phosphoserine" evidence="2">
    <location>
        <position position="524"/>
    </location>
</feature>
<feature type="modified residue" description="Phosphoserine" evidence="2">
    <location>
        <position position="602"/>
    </location>
</feature>
<feature type="modified residue" description="Phosphoserine" evidence="2">
    <location>
        <position position="651"/>
    </location>
</feature>
<feature type="modified residue" description="Phosphothreonine" evidence="2">
    <location>
        <position position="657"/>
    </location>
</feature>
<feature type="modified residue" description="Phosphoserine" evidence="2">
    <location>
        <position position="711"/>
    </location>
</feature>
<feature type="sequence conflict" description="In Ref. 2; BAC29194." evidence="4" ref="2">
    <original>P</original>
    <variation>T</variation>
    <location>
        <position position="364"/>
    </location>
</feature>
<keyword id="KW-0007">Acetylation</keyword>
<keyword id="KW-0067">ATP-binding</keyword>
<keyword id="KW-0460">Magnesium</keyword>
<keyword id="KW-0464">Manganese</keyword>
<keyword id="KW-0479">Metal-binding</keyword>
<keyword id="KW-0507">mRNA processing</keyword>
<keyword id="KW-0547">Nucleotide-binding</keyword>
<keyword id="KW-0539">Nucleus</keyword>
<keyword id="KW-0597">Phosphoprotein</keyword>
<keyword id="KW-1185">Reference proteome</keyword>
<keyword id="KW-0694">RNA-binding</keyword>
<keyword id="KW-0808">Transferase</keyword>
<gene>
    <name type="primary">Papolg</name>
</gene>
<evidence type="ECO:0000250" key="1"/>
<evidence type="ECO:0000250" key="2">
    <source>
        <dbReference type="UniProtKB" id="Q9BWT3"/>
    </source>
</evidence>
<evidence type="ECO:0000256" key="3">
    <source>
        <dbReference type="SAM" id="MobiDB-lite"/>
    </source>
</evidence>
<evidence type="ECO:0000305" key="4"/>
<organism>
    <name type="scientific">Mus musculus</name>
    <name type="common">Mouse</name>
    <dbReference type="NCBI Taxonomy" id="10090"/>
    <lineage>
        <taxon>Eukaryota</taxon>
        <taxon>Metazoa</taxon>
        <taxon>Chordata</taxon>
        <taxon>Craniata</taxon>
        <taxon>Vertebrata</taxon>
        <taxon>Euteleostomi</taxon>
        <taxon>Mammalia</taxon>
        <taxon>Eutheria</taxon>
        <taxon>Euarchontoglires</taxon>
        <taxon>Glires</taxon>
        <taxon>Rodentia</taxon>
        <taxon>Myomorpha</taxon>
        <taxon>Muroidea</taxon>
        <taxon>Muridae</taxon>
        <taxon>Murinae</taxon>
        <taxon>Mus</taxon>
        <taxon>Mus</taxon>
    </lineage>
</organism>
<protein>
    <recommendedName>
        <fullName>Poly(A) polymerase gamma</fullName>
        <shortName>PAP-gamma</shortName>
        <ecNumber>2.7.7.19</ecNumber>
    </recommendedName>
    <alternativeName>
        <fullName>Polynucleotide adenylyltransferase gamma</fullName>
    </alternativeName>
    <alternativeName>
        <fullName>SRP RNA 3'-adenylating enzyme</fullName>
    </alternativeName>
    <alternativeName>
        <fullName>Signal recognition particle RNA-adenylating enzyme</fullName>
        <shortName>SRP RNA-adenylating enzyme</shortName>
    </alternativeName>
</protein>
<name>PAPOG_MOUSE</name>
<reference key="1">
    <citation type="submission" date="2005-06" db="EMBL/GenBank/DDBJ databases">
        <title>Comparative analysis of the sequences of the SRP 3'-adenylating enzyme in human, mouse and Xenopus.</title>
        <authorList>
            <person name="Bhattacharya R."/>
            <person name="Gaikwad A."/>
            <person name="Reddy R."/>
        </authorList>
    </citation>
    <scope>NUCLEOTIDE SEQUENCE [MRNA]</scope>
</reference>
<reference key="2">
    <citation type="journal article" date="2005" name="Science">
        <title>The transcriptional landscape of the mammalian genome.</title>
        <authorList>
            <person name="Carninci P."/>
            <person name="Kasukawa T."/>
            <person name="Katayama S."/>
            <person name="Gough J."/>
            <person name="Frith M.C."/>
            <person name="Maeda N."/>
            <person name="Oyama R."/>
            <person name="Ravasi T."/>
            <person name="Lenhard B."/>
            <person name="Wells C."/>
            <person name="Kodzius R."/>
            <person name="Shimokawa K."/>
            <person name="Bajic V.B."/>
            <person name="Brenner S.E."/>
            <person name="Batalov S."/>
            <person name="Forrest A.R."/>
            <person name="Zavolan M."/>
            <person name="Davis M.J."/>
            <person name="Wilming L.G."/>
            <person name="Aidinis V."/>
            <person name="Allen J.E."/>
            <person name="Ambesi-Impiombato A."/>
            <person name="Apweiler R."/>
            <person name="Aturaliya R.N."/>
            <person name="Bailey T.L."/>
            <person name="Bansal M."/>
            <person name="Baxter L."/>
            <person name="Beisel K.W."/>
            <person name="Bersano T."/>
            <person name="Bono H."/>
            <person name="Chalk A.M."/>
            <person name="Chiu K.P."/>
            <person name="Choudhary V."/>
            <person name="Christoffels A."/>
            <person name="Clutterbuck D.R."/>
            <person name="Crowe M.L."/>
            <person name="Dalla E."/>
            <person name="Dalrymple B.P."/>
            <person name="de Bono B."/>
            <person name="Della Gatta G."/>
            <person name="di Bernardo D."/>
            <person name="Down T."/>
            <person name="Engstrom P."/>
            <person name="Fagiolini M."/>
            <person name="Faulkner G."/>
            <person name="Fletcher C.F."/>
            <person name="Fukushima T."/>
            <person name="Furuno M."/>
            <person name="Futaki S."/>
            <person name="Gariboldi M."/>
            <person name="Georgii-Hemming P."/>
            <person name="Gingeras T.R."/>
            <person name="Gojobori T."/>
            <person name="Green R.E."/>
            <person name="Gustincich S."/>
            <person name="Harbers M."/>
            <person name="Hayashi Y."/>
            <person name="Hensch T.K."/>
            <person name="Hirokawa N."/>
            <person name="Hill D."/>
            <person name="Huminiecki L."/>
            <person name="Iacono M."/>
            <person name="Ikeo K."/>
            <person name="Iwama A."/>
            <person name="Ishikawa T."/>
            <person name="Jakt M."/>
            <person name="Kanapin A."/>
            <person name="Katoh M."/>
            <person name="Kawasawa Y."/>
            <person name="Kelso J."/>
            <person name="Kitamura H."/>
            <person name="Kitano H."/>
            <person name="Kollias G."/>
            <person name="Krishnan S.P."/>
            <person name="Kruger A."/>
            <person name="Kummerfeld S.K."/>
            <person name="Kurochkin I.V."/>
            <person name="Lareau L.F."/>
            <person name="Lazarevic D."/>
            <person name="Lipovich L."/>
            <person name="Liu J."/>
            <person name="Liuni S."/>
            <person name="McWilliam S."/>
            <person name="Madan Babu M."/>
            <person name="Madera M."/>
            <person name="Marchionni L."/>
            <person name="Matsuda H."/>
            <person name="Matsuzawa S."/>
            <person name="Miki H."/>
            <person name="Mignone F."/>
            <person name="Miyake S."/>
            <person name="Morris K."/>
            <person name="Mottagui-Tabar S."/>
            <person name="Mulder N."/>
            <person name="Nakano N."/>
            <person name="Nakauchi H."/>
            <person name="Ng P."/>
            <person name="Nilsson R."/>
            <person name="Nishiguchi S."/>
            <person name="Nishikawa S."/>
            <person name="Nori F."/>
            <person name="Ohara O."/>
            <person name="Okazaki Y."/>
            <person name="Orlando V."/>
            <person name="Pang K.C."/>
            <person name="Pavan W.J."/>
            <person name="Pavesi G."/>
            <person name="Pesole G."/>
            <person name="Petrovsky N."/>
            <person name="Piazza S."/>
            <person name="Reed J."/>
            <person name="Reid J.F."/>
            <person name="Ring B.Z."/>
            <person name="Ringwald M."/>
            <person name="Rost B."/>
            <person name="Ruan Y."/>
            <person name="Salzberg S.L."/>
            <person name="Sandelin A."/>
            <person name="Schneider C."/>
            <person name="Schoenbach C."/>
            <person name="Sekiguchi K."/>
            <person name="Semple C.A."/>
            <person name="Seno S."/>
            <person name="Sessa L."/>
            <person name="Sheng Y."/>
            <person name="Shibata Y."/>
            <person name="Shimada H."/>
            <person name="Shimada K."/>
            <person name="Silva D."/>
            <person name="Sinclair B."/>
            <person name="Sperling S."/>
            <person name="Stupka E."/>
            <person name="Sugiura K."/>
            <person name="Sultana R."/>
            <person name="Takenaka Y."/>
            <person name="Taki K."/>
            <person name="Tammoja K."/>
            <person name="Tan S.L."/>
            <person name="Tang S."/>
            <person name="Taylor M.S."/>
            <person name="Tegner J."/>
            <person name="Teichmann S.A."/>
            <person name="Ueda H.R."/>
            <person name="van Nimwegen E."/>
            <person name="Verardo R."/>
            <person name="Wei C.L."/>
            <person name="Yagi K."/>
            <person name="Yamanishi H."/>
            <person name="Zabarovsky E."/>
            <person name="Zhu S."/>
            <person name="Zimmer A."/>
            <person name="Hide W."/>
            <person name="Bult C."/>
            <person name="Grimmond S.M."/>
            <person name="Teasdale R.D."/>
            <person name="Liu E.T."/>
            <person name="Brusic V."/>
            <person name="Quackenbush J."/>
            <person name="Wahlestedt C."/>
            <person name="Mattick J.S."/>
            <person name="Hume D.A."/>
            <person name="Kai C."/>
            <person name="Sasaki D."/>
            <person name="Tomaru Y."/>
            <person name="Fukuda S."/>
            <person name="Kanamori-Katayama M."/>
            <person name="Suzuki M."/>
            <person name="Aoki J."/>
            <person name="Arakawa T."/>
            <person name="Iida J."/>
            <person name="Imamura K."/>
            <person name="Itoh M."/>
            <person name="Kato T."/>
            <person name="Kawaji H."/>
            <person name="Kawagashira N."/>
            <person name="Kawashima T."/>
            <person name="Kojima M."/>
            <person name="Kondo S."/>
            <person name="Konno H."/>
            <person name="Nakano K."/>
            <person name="Ninomiya N."/>
            <person name="Nishio T."/>
            <person name="Okada M."/>
            <person name="Plessy C."/>
            <person name="Shibata K."/>
            <person name="Shiraki T."/>
            <person name="Suzuki S."/>
            <person name="Tagami M."/>
            <person name="Waki K."/>
            <person name="Watahiki A."/>
            <person name="Okamura-Oho Y."/>
            <person name="Suzuki H."/>
            <person name="Kawai J."/>
            <person name="Hayashizaki Y."/>
        </authorList>
    </citation>
    <scope>NUCLEOTIDE SEQUENCE [LARGE SCALE MRNA]</scope>
    <source>
        <strain>C57BL/6J</strain>
        <tissue>Cerebellum</tissue>
    </source>
</reference>
<reference key="3">
    <citation type="journal article" date="2009" name="PLoS Biol.">
        <title>Lineage-specific biology revealed by a finished genome assembly of the mouse.</title>
        <authorList>
            <person name="Church D.M."/>
            <person name="Goodstadt L."/>
            <person name="Hillier L.W."/>
            <person name="Zody M.C."/>
            <person name="Goldstein S."/>
            <person name="She X."/>
            <person name="Bult C.J."/>
            <person name="Agarwala R."/>
            <person name="Cherry J.L."/>
            <person name="DiCuccio M."/>
            <person name="Hlavina W."/>
            <person name="Kapustin Y."/>
            <person name="Meric P."/>
            <person name="Maglott D."/>
            <person name="Birtle Z."/>
            <person name="Marques A.C."/>
            <person name="Graves T."/>
            <person name="Zhou S."/>
            <person name="Teague B."/>
            <person name="Potamousis K."/>
            <person name="Churas C."/>
            <person name="Place M."/>
            <person name="Herschleb J."/>
            <person name="Runnheim R."/>
            <person name="Forrest D."/>
            <person name="Amos-Landgraf J."/>
            <person name="Schwartz D.C."/>
            <person name="Cheng Z."/>
            <person name="Lindblad-Toh K."/>
            <person name="Eichler E.E."/>
            <person name="Ponting C.P."/>
        </authorList>
    </citation>
    <scope>NUCLEOTIDE SEQUENCE [LARGE SCALE GENOMIC DNA]</scope>
    <source>
        <strain>C57BL/6J</strain>
    </source>
</reference>
<reference key="4">
    <citation type="journal article" date="2004" name="Genome Res.">
        <title>The status, quality, and expansion of the NIH full-length cDNA project: the Mammalian Gene Collection (MGC).</title>
        <authorList>
            <consortium name="The MGC Project Team"/>
        </authorList>
    </citation>
    <scope>NUCLEOTIDE SEQUENCE [LARGE SCALE MRNA]</scope>
    <source>
        <strain>C57BL/6J</strain>
        <strain>FVB/N</strain>
        <tissue>Mammary tumor</tissue>
    </source>
</reference>
<reference key="5">
    <citation type="journal article" date="2007" name="Proc. Natl. Acad. Sci. U.S.A.">
        <title>Large-scale phosphorylation analysis of mouse liver.</title>
        <authorList>
            <person name="Villen J."/>
            <person name="Beausoleil S.A."/>
            <person name="Gerber S.A."/>
            <person name="Gygi S.P."/>
        </authorList>
    </citation>
    <scope>IDENTIFICATION BY MASS SPECTROMETRY [LARGE SCALE ANALYSIS]</scope>
    <source>
        <tissue>Liver</tissue>
    </source>
</reference>
<reference key="6">
    <citation type="journal article" date="2009" name="Immunity">
        <title>The phagosomal proteome in interferon-gamma-activated macrophages.</title>
        <authorList>
            <person name="Trost M."/>
            <person name="English L."/>
            <person name="Lemieux S."/>
            <person name="Courcelles M."/>
            <person name="Desjardins M."/>
            <person name="Thibault P."/>
        </authorList>
    </citation>
    <scope>IDENTIFICATION BY MASS SPECTROMETRY [LARGE SCALE ANALYSIS]</scope>
</reference>
<reference key="7">
    <citation type="journal article" date="2010" name="Cell">
        <title>A tissue-specific atlas of mouse protein phosphorylation and expression.</title>
        <authorList>
            <person name="Huttlin E.L."/>
            <person name="Jedrychowski M.P."/>
            <person name="Elias J.E."/>
            <person name="Goswami T."/>
            <person name="Rad R."/>
            <person name="Beausoleil S.A."/>
            <person name="Villen J."/>
            <person name="Haas W."/>
            <person name="Sowa M.E."/>
            <person name="Gygi S.P."/>
        </authorList>
    </citation>
    <scope>IDENTIFICATION BY MASS SPECTROMETRY [LARGE SCALE ANALYSIS]</scope>
    <source>
        <tissue>Kidney</tissue>
        <tissue>Liver</tissue>
        <tissue>Testis</tissue>
    </source>
</reference>
<proteinExistence type="evidence at protein level"/>